<accession>B7NLV2</accession>
<gene>
    <name evidence="1" type="primary">entS</name>
    <name type="ordered locus">ECIAI39_0568</name>
</gene>
<proteinExistence type="inferred from homology"/>
<name>ENTS_ECO7I</name>
<sequence>MNKQSWLLNLSLLKTHPAFRAVFLARFISIVSLGLLGVAVPVQIQMMTHSTWQVGLSVTLTGGAMFVGLMVGGVLADRYERKKVILLARGTCGIGFIGLCLNALLPEPSLLAIYLLGLWDGFFASLGVTALLAATPALVGRENLMQAGAITMLTVRLGSVISPMIGGLLLATGGVAWNYGLAAAGTFITLLPLLSLPALPPPPQPREHPLKSLLAGFRFLLASPLVGGIALLGGLLTMASAVRVLYPALADNWQMSAAQIGFLYAAIPLGAAIGALTSGKLAHSARPGLLMLLSTLGSFLAIGLFGLMPMWILGVVCLALFGWLSAVSSLLQYTMLQTQTPEAMLGRINGLWTAQNVTGDAIGAALLGGLGAMMTPVASASASGFGLLIIGVLLLLVLVELRRFRQTPPQMTASDS</sequence>
<protein>
    <recommendedName>
        <fullName evidence="1">Enterobactin exporter EntS</fullName>
    </recommendedName>
</protein>
<organism>
    <name type="scientific">Escherichia coli O7:K1 (strain IAI39 / ExPEC)</name>
    <dbReference type="NCBI Taxonomy" id="585057"/>
    <lineage>
        <taxon>Bacteria</taxon>
        <taxon>Pseudomonadati</taxon>
        <taxon>Pseudomonadota</taxon>
        <taxon>Gammaproteobacteria</taxon>
        <taxon>Enterobacterales</taxon>
        <taxon>Enterobacteriaceae</taxon>
        <taxon>Escherichia</taxon>
    </lineage>
</organism>
<reference key="1">
    <citation type="journal article" date="2009" name="PLoS Genet.">
        <title>Organised genome dynamics in the Escherichia coli species results in highly diverse adaptive paths.</title>
        <authorList>
            <person name="Touchon M."/>
            <person name="Hoede C."/>
            <person name="Tenaillon O."/>
            <person name="Barbe V."/>
            <person name="Baeriswyl S."/>
            <person name="Bidet P."/>
            <person name="Bingen E."/>
            <person name="Bonacorsi S."/>
            <person name="Bouchier C."/>
            <person name="Bouvet O."/>
            <person name="Calteau A."/>
            <person name="Chiapello H."/>
            <person name="Clermont O."/>
            <person name="Cruveiller S."/>
            <person name="Danchin A."/>
            <person name="Diard M."/>
            <person name="Dossat C."/>
            <person name="Karoui M.E."/>
            <person name="Frapy E."/>
            <person name="Garry L."/>
            <person name="Ghigo J.M."/>
            <person name="Gilles A.M."/>
            <person name="Johnson J."/>
            <person name="Le Bouguenec C."/>
            <person name="Lescat M."/>
            <person name="Mangenot S."/>
            <person name="Martinez-Jehanne V."/>
            <person name="Matic I."/>
            <person name="Nassif X."/>
            <person name="Oztas S."/>
            <person name="Petit M.A."/>
            <person name="Pichon C."/>
            <person name="Rouy Z."/>
            <person name="Ruf C.S."/>
            <person name="Schneider D."/>
            <person name="Tourret J."/>
            <person name="Vacherie B."/>
            <person name="Vallenet D."/>
            <person name="Medigue C."/>
            <person name="Rocha E.P.C."/>
            <person name="Denamur E."/>
        </authorList>
    </citation>
    <scope>NUCLEOTIDE SEQUENCE [LARGE SCALE GENOMIC DNA]</scope>
    <source>
        <strain>IAI39 / ExPEC</strain>
    </source>
</reference>
<evidence type="ECO:0000255" key="1">
    <source>
        <dbReference type="HAMAP-Rule" id="MF_01436"/>
    </source>
</evidence>
<comment type="function">
    <text evidence="1">Component of an export pathway for enterobactin.</text>
</comment>
<comment type="subcellular location">
    <subcellularLocation>
        <location evidence="1">Cell inner membrane</location>
        <topology evidence="1">Multi-pass membrane protein</topology>
    </subcellularLocation>
</comment>
<comment type="similarity">
    <text evidence="1">Belongs to the major facilitator superfamily. EntS (TC 2.A.1.38) family.</text>
</comment>
<dbReference type="EMBL" id="CU928164">
    <property type="protein sequence ID" value="CAR16705.1"/>
    <property type="molecule type" value="Genomic_DNA"/>
</dbReference>
<dbReference type="RefSeq" id="WP_001041787.1">
    <property type="nucleotide sequence ID" value="NC_011750.1"/>
</dbReference>
<dbReference type="RefSeq" id="YP_002406594.1">
    <property type="nucleotide sequence ID" value="NC_011750.1"/>
</dbReference>
<dbReference type="SMR" id="B7NLV2"/>
<dbReference type="STRING" id="585057.ECIAI39_0568"/>
<dbReference type="KEGG" id="ect:ECIAI39_0568"/>
<dbReference type="PATRIC" id="fig|585057.6.peg.605"/>
<dbReference type="HOGENOM" id="CLU_034180_11_0_6"/>
<dbReference type="Proteomes" id="UP000000749">
    <property type="component" value="Chromosome"/>
</dbReference>
<dbReference type="GO" id="GO:0005886">
    <property type="term" value="C:plasma membrane"/>
    <property type="evidence" value="ECO:0007669"/>
    <property type="project" value="UniProtKB-SubCell"/>
</dbReference>
<dbReference type="GO" id="GO:0042931">
    <property type="term" value="F:enterobactin transmembrane transporter activity"/>
    <property type="evidence" value="ECO:0007669"/>
    <property type="project" value="InterPro"/>
</dbReference>
<dbReference type="CDD" id="cd06173">
    <property type="entry name" value="MFS_MefA_like"/>
    <property type="match status" value="1"/>
</dbReference>
<dbReference type="FunFam" id="1.20.1250.20:FF:000056">
    <property type="entry name" value="Enterobactin exporter EntS"/>
    <property type="match status" value="1"/>
</dbReference>
<dbReference type="Gene3D" id="1.20.1250.20">
    <property type="entry name" value="MFS general substrate transporter like domains"/>
    <property type="match status" value="1"/>
</dbReference>
<dbReference type="HAMAP" id="MF_01436">
    <property type="entry name" value="MFS_EntS"/>
    <property type="match status" value="1"/>
</dbReference>
<dbReference type="InterPro" id="IPR023722">
    <property type="entry name" value="Enterobactin_exp_EntS"/>
</dbReference>
<dbReference type="InterPro" id="IPR020846">
    <property type="entry name" value="MFS_dom"/>
</dbReference>
<dbReference type="InterPro" id="IPR036259">
    <property type="entry name" value="MFS_trans_sf"/>
</dbReference>
<dbReference type="InterPro" id="IPR010290">
    <property type="entry name" value="TM_effector"/>
</dbReference>
<dbReference type="NCBIfam" id="NF007792">
    <property type="entry name" value="PRK10489.1"/>
    <property type="match status" value="1"/>
</dbReference>
<dbReference type="PANTHER" id="PTHR23513:SF9">
    <property type="entry name" value="ENTEROBACTIN EXPORTER ENTS"/>
    <property type="match status" value="1"/>
</dbReference>
<dbReference type="PANTHER" id="PTHR23513">
    <property type="entry name" value="INTEGRAL MEMBRANE EFFLUX PROTEIN-RELATED"/>
    <property type="match status" value="1"/>
</dbReference>
<dbReference type="Pfam" id="PF05977">
    <property type="entry name" value="MFS_3"/>
    <property type="match status" value="1"/>
</dbReference>
<dbReference type="SUPFAM" id="SSF103473">
    <property type="entry name" value="MFS general substrate transporter"/>
    <property type="match status" value="1"/>
</dbReference>
<dbReference type="PROSITE" id="PS50850">
    <property type="entry name" value="MFS"/>
    <property type="match status" value="1"/>
</dbReference>
<feature type="chain" id="PRO_1000145844" description="Enterobactin exporter EntS">
    <location>
        <begin position="1"/>
        <end position="416"/>
    </location>
</feature>
<feature type="topological domain" description="Cytoplasmic" evidence="1">
    <location>
        <begin position="1"/>
        <end position="21"/>
    </location>
</feature>
<feature type="transmembrane region" description="Helical" evidence="1">
    <location>
        <begin position="22"/>
        <end position="42"/>
    </location>
</feature>
<feature type="topological domain" description="Periplasmic" evidence="1">
    <location>
        <begin position="43"/>
        <end position="55"/>
    </location>
</feature>
<feature type="transmembrane region" description="Helical" evidence="1">
    <location>
        <begin position="56"/>
        <end position="76"/>
    </location>
</feature>
<feature type="topological domain" description="Cytoplasmic" evidence="1">
    <location>
        <begin position="77"/>
        <end position="83"/>
    </location>
</feature>
<feature type="transmembrane region" description="Helical" evidence="1">
    <location>
        <begin position="84"/>
        <end position="104"/>
    </location>
</feature>
<feature type="topological domain" description="Periplasmic" evidence="1">
    <location>
        <begin position="105"/>
        <end position="109"/>
    </location>
</feature>
<feature type="transmembrane region" description="Helical" evidence="1">
    <location>
        <begin position="110"/>
        <end position="130"/>
    </location>
</feature>
<feature type="topological domain" description="Cytoplasmic" evidence="1">
    <location>
        <begin position="131"/>
        <end position="156"/>
    </location>
</feature>
<feature type="transmembrane region" description="Helical" evidence="1">
    <location>
        <begin position="157"/>
        <end position="177"/>
    </location>
</feature>
<feature type="topological domain" description="Periplasmic" evidence="1">
    <location>
        <position position="178"/>
    </location>
</feature>
<feature type="transmembrane region" description="Helical" evidence="1">
    <location>
        <begin position="179"/>
        <end position="199"/>
    </location>
</feature>
<feature type="topological domain" description="Cytoplasmic" evidence="1">
    <location>
        <begin position="200"/>
        <end position="218"/>
    </location>
</feature>
<feature type="transmembrane region" description="Helical" evidence="1">
    <location>
        <begin position="219"/>
        <end position="239"/>
    </location>
</feature>
<feature type="topological domain" description="Periplasmic" evidence="1">
    <location>
        <begin position="240"/>
        <end position="256"/>
    </location>
</feature>
<feature type="transmembrane region" description="Helical" evidence="1">
    <location>
        <begin position="257"/>
        <end position="277"/>
    </location>
</feature>
<feature type="topological domain" description="Cytoplasmic" evidence="1">
    <location>
        <begin position="278"/>
        <end position="287"/>
    </location>
</feature>
<feature type="transmembrane region" description="Helical" evidence="1">
    <location>
        <begin position="288"/>
        <end position="307"/>
    </location>
</feature>
<feature type="topological domain" description="Periplasmic" evidence="1">
    <location>
        <begin position="308"/>
        <end position="313"/>
    </location>
</feature>
<feature type="transmembrane region" description="Helical" evidence="1">
    <location>
        <begin position="314"/>
        <end position="336"/>
    </location>
</feature>
<feature type="topological domain" description="Cytoplasmic" evidence="1">
    <location>
        <begin position="337"/>
        <end position="356"/>
    </location>
</feature>
<feature type="transmembrane region" description="Helical" evidence="1">
    <location>
        <begin position="357"/>
        <end position="377"/>
    </location>
</feature>
<feature type="topological domain" description="Periplasmic" evidence="1">
    <location>
        <position position="378"/>
    </location>
</feature>
<feature type="transmembrane region" description="Helical" evidence="1">
    <location>
        <begin position="379"/>
        <end position="399"/>
    </location>
</feature>
<feature type="topological domain" description="Cytoplasmic" evidence="1">
    <location>
        <begin position="400"/>
        <end position="416"/>
    </location>
</feature>
<keyword id="KW-0997">Cell inner membrane</keyword>
<keyword id="KW-1003">Cell membrane</keyword>
<keyword id="KW-0472">Membrane</keyword>
<keyword id="KW-0812">Transmembrane</keyword>
<keyword id="KW-1133">Transmembrane helix</keyword>
<keyword id="KW-0813">Transport</keyword>